<reference key="1">
    <citation type="submission" date="2008-01" db="EMBL/GenBank/DDBJ databases">
        <title>Complete sequence of chromosome of Caulobacter sp. K31.</title>
        <authorList>
            <consortium name="US DOE Joint Genome Institute"/>
            <person name="Copeland A."/>
            <person name="Lucas S."/>
            <person name="Lapidus A."/>
            <person name="Barry K."/>
            <person name="Glavina del Rio T."/>
            <person name="Dalin E."/>
            <person name="Tice H."/>
            <person name="Pitluck S."/>
            <person name="Bruce D."/>
            <person name="Goodwin L."/>
            <person name="Thompson L.S."/>
            <person name="Brettin T."/>
            <person name="Detter J.C."/>
            <person name="Han C."/>
            <person name="Schmutz J."/>
            <person name="Larimer F."/>
            <person name="Land M."/>
            <person name="Hauser L."/>
            <person name="Kyrpides N."/>
            <person name="Kim E."/>
            <person name="Stephens C."/>
            <person name="Richardson P."/>
        </authorList>
    </citation>
    <scope>NUCLEOTIDE SEQUENCE [LARGE SCALE GENOMIC DNA]</scope>
    <source>
        <strain>K31</strain>
    </source>
</reference>
<comment type="function">
    <text evidence="1">Heme chaperone required for the biogenesis of c-type cytochromes. Transiently binds heme delivered by CcmC and transfers the heme to apo-cytochromes in a process facilitated by CcmF and CcmH.</text>
</comment>
<comment type="subcellular location">
    <subcellularLocation>
        <location evidence="1">Cell inner membrane</location>
        <topology evidence="1">Single-pass type II membrane protein</topology>
        <orientation evidence="1">Periplasmic side</orientation>
    </subcellularLocation>
</comment>
<comment type="similarity">
    <text evidence="1">Belongs to the CcmE/CycJ family.</text>
</comment>
<proteinExistence type="inferred from homology"/>
<organism>
    <name type="scientific">Caulobacter sp. (strain K31)</name>
    <dbReference type="NCBI Taxonomy" id="366602"/>
    <lineage>
        <taxon>Bacteria</taxon>
        <taxon>Pseudomonadati</taxon>
        <taxon>Pseudomonadota</taxon>
        <taxon>Alphaproteobacteria</taxon>
        <taxon>Caulobacterales</taxon>
        <taxon>Caulobacteraceae</taxon>
        <taxon>Caulobacter</taxon>
    </lineage>
</organism>
<feature type="chain" id="PRO_1000088523" description="Cytochrome c-type biogenesis protein CcmE">
    <location>
        <begin position="1"/>
        <end position="166"/>
    </location>
</feature>
<feature type="topological domain" description="Cytoplasmic" evidence="1">
    <location>
        <begin position="1"/>
        <end position="13"/>
    </location>
</feature>
<feature type="transmembrane region" description="Helical; Signal-anchor for type II membrane protein" evidence="1">
    <location>
        <begin position="14"/>
        <end position="34"/>
    </location>
</feature>
<feature type="topological domain" description="Periplasmic" evidence="1">
    <location>
        <begin position="35"/>
        <end position="166"/>
    </location>
</feature>
<feature type="region of interest" description="Disordered" evidence="2">
    <location>
        <begin position="143"/>
        <end position="166"/>
    </location>
</feature>
<feature type="binding site" description="covalent" evidence="1">
    <location>
        <position position="128"/>
    </location>
    <ligand>
        <name>heme</name>
        <dbReference type="ChEBI" id="CHEBI:30413"/>
    </ligand>
</feature>
<feature type="binding site" description="axial binding residue" evidence="1">
    <location>
        <position position="132"/>
    </location>
    <ligand>
        <name>heme</name>
        <dbReference type="ChEBI" id="CHEBI:30413"/>
    </ligand>
    <ligandPart>
        <name>Fe</name>
        <dbReference type="ChEBI" id="CHEBI:18248"/>
    </ligandPart>
</feature>
<protein>
    <recommendedName>
        <fullName evidence="1">Cytochrome c-type biogenesis protein CcmE</fullName>
    </recommendedName>
    <alternativeName>
        <fullName evidence="1">Cytochrome c maturation protein E</fullName>
    </alternativeName>
    <alternativeName>
        <fullName evidence="1">Heme chaperone CcmE</fullName>
    </alternativeName>
</protein>
<evidence type="ECO:0000255" key="1">
    <source>
        <dbReference type="HAMAP-Rule" id="MF_01959"/>
    </source>
</evidence>
<evidence type="ECO:0000256" key="2">
    <source>
        <dbReference type="SAM" id="MobiDB-lite"/>
    </source>
</evidence>
<dbReference type="EMBL" id="CP000927">
    <property type="protein sequence ID" value="ABZ73017.1"/>
    <property type="molecule type" value="Genomic_DNA"/>
</dbReference>
<dbReference type="SMR" id="B0SVC7"/>
<dbReference type="STRING" id="366602.Caul_3892"/>
<dbReference type="KEGG" id="cak:Caul_3892"/>
<dbReference type="eggNOG" id="COG2332">
    <property type="taxonomic scope" value="Bacteria"/>
</dbReference>
<dbReference type="HOGENOM" id="CLU_079503_1_1_5"/>
<dbReference type="OrthoDB" id="9793584at2"/>
<dbReference type="GO" id="GO:0005886">
    <property type="term" value="C:plasma membrane"/>
    <property type="evidence" value="ECO:0007669"/>
    <property type="project" value="UniProtKB-SubCell"/>
</dbReference>
<dbReference type="GO" id="GO:0020037">
    <property type="term" value="F:heme binding"/>
    <property type="evidence" value="ECO:0007669"/>
    <property type="project" value="InterPro"/>
</dbReference>
<dbReference type="GO" id="GO:0046872">
    <property type="term" value="F:metal ion binding"/>
    <property type="evidence" value="ECO:0007669"/>
    <property type="project" value="UniProtKB-KW"/>
</dbReference>
<dbReference type="GO" id="GO:0017004">
    <property type="term" value="P:cytochrome complex assembly"/>
    <property type="evidence" value="ECO:0007669"/>
    <property type="project" value="UniProtKB-KW"/>
</dbReference>
<dbReference type="Gene3D" id="2.40.50.140">
    <property type="entry name" value="Nucleic acid-binding proteins"/>
    <property type="match status" value="1"/>
</dbReference>
<dbReference type="HAMAP" id="MF_01959">
    <property type="entry name" value="CcmE"/>
    <property type="match status" value="1"/>
</dbReference>
<dbReference type="InterPro" id="IPR004329">
    <property type="entry name" value="CcmE"/>
</dbReference>
<dbReference type="InterPro" id="IPR036127">
    <property type="entry name" value="CcmE-like_sf"/>
</dbReference>
<dbReference type="InterPro" id="IPR012340">
    <property type="entry name" value="NA-bd_OB-fold"/>
</dbReference>
<dbReference type="NCBIfam" id="NF009727">
    <property type="entry name" value="PRK13254.1-1"/>
    <property type="match status" value="1"/>
</dbReference>
<dbReference type="NCBIfam" id="NF009731">
    <property type="entry name" value="PRK13254.1-5"/>
    <property type="match status" value="1"/>
</dbReference>
<dbReference type="PANTHER" id="PTHR34128">
    <property type="entry name" value="CYTOCHROME C-TYPE BIOGENESIS PROTEIN CCME HOMOLOG, MITOCHONDRIAL"/>
    <property type="match status" value="1"/>
</dbReference>
<dbReference type="PANTHER" id="PTHR34128:SF2">
    <property type="entry name" value="CYTOCHROME C-TYPE BIOGENESIS PROTEIN CCME HOMOLOG, MITOCHONDRIAL"/>
    <property type="match status" value="1"/>
</dbReference>
<dbReference type="Pfam" id="PF03100">
    <property type="entry name" value="CcmE"/>
    <property type="match status" value="1"/>
</dbReference>
<dbReference type="SUPFAM" id="SSF82093">
    <property type="entry name" value="Heme chaperone CcmE"/>
    <property type="match status" value="1"/>
</dbReference>
<accession>B0SVC7</accession>
<keyword id="KW-0997">Cell inner membrane</keyword>
<keyword id="KW-1003">Cell membrane</keyword>
<keyword id="KW-0201">Cytochrome c-type biogenesis</keyword>
<keyword id="KW-0349">Heme</keyword>
<keyword id="KW-0408">Iron</keyword>
<keyword id="KW-0472">Membrane</keyword>
<keyword id="KW-0479">Metal-binding</keyword>
<keyword id="KW-0735">Signal-anchor</keyword>
<keyword id="KW-0812">Transmembrane</keyword>
<keyword id="KW-1133">Transmembrane helix</keyword>
<sequence length="166" mass="17836">MNFLPKSRKARRRLTILAVAAPVVALAVGLALWGMRDAISLFYTPAQAAAAHVPAGRKVQLGGLVKAGSVVKHPDGLVEFVVADQRSTALVHYKGDLPDLFREGQGIVASGAFDESGTFVANQVLAKHDERYMPREVAKALKEQGEWRGDGQAPSYQGYKPGKPNT</sequence>
<name>CCME_CAUSK</name>
<gene>
    <name evidence="1" type="primary">ccmE</name>
    <name evidence="1" type="synonym">cycJ</name>
    <name type="ordered locus">Caul_3892</name>
</gene>